<protein>
    <recommendedName>
        <fullName>Growth-regulating factor 5</fullName>
        <shortName>AtGRF5</shortName>
    </recommendedName>
    <alternativeName>
        <fullName>Transcription activator GRF5</fullName>
    </alternativeName>
</protein>
<feature type="chain" id="PRO_0000419296" description="Growth-regulating factor 5">
    <location>
        <begin position="1"/>
        <end position="397"/>
    </location>
</feature>
<feature type="domain" description="QLQ" evidence="1">
    <location>
        <begin position="16"/>
        <end position="51"/>
    </location>
</feature>
<feature type="domain" description="WRC" evidence="2">
    <location>
        <begin position="81"/>
        <end position="125"/>
    </location>
</feature>
<feature type="region of interest" description="Disordered" evidence="3">
    <location>
        <begin position="108"/>
        <end position="172"/>
    </location>
</feature>
<feature type="region of interest" description="Disordered" evidence="3">
    <location>
        <begin position="197"/>
        <end position="217"/>
    </location>
</feature>
<feature type="region of interest" description="Disordered" evidence="3">
    <location>
        <begin position="288"/>
        <end position="320"/>
    </location>
</feature>
<feature type="region of interest" description="Disordered" evidence="3">
    <location>
        <begin position="340"/>
        <end position="397"/>
    </location>
</feature>
<feature type="short sequence motif" description="Bipartite nuclear localization signal" evidence="2">
    <location>
        <begin position="78"/>
        <end position="96"/>
    </location>
</feature>
<feature type="short sequence motif" description="Bipartite nuclear localization signal" evidence="2">
    <location>
        <begin position="114"/>
        <end position="121"/>
    </location>
</feature>
<feature type="compositionally biased region" description="Basic residues" evidence="3">
    <location>
        <begin position="111"/>
        <end position="120"/>
    </location>
</feature>
<feature type="compositionally biased region" description="Low complexity" evidence="3">
    <location>
        <begin position="128"/>
        <end position="172"/>
    </location>
</feature>
<feature type="compositionally biased region" description="Basic and acidic residues" evidence="3">
    <location>
        <begin position="288"/>
        <end position="298"/>
    </location>
</feature>
<feature type="splice variant" id="VSP_044146" description="In isoform 2." evidence="8">
    <original>S</original>
    <variation>N</variation>
    <location>
        <position position="397"/>
    </location>
</feature>
<name>GRF5_ARATH</name>
<organism>
    <name type="scientific">Arabidopsis thaliana</name>
    <name type="common">Mouse-ear cress</name>
    <dbReference type="NCBI Taxonomy" id="3702"/>
    <lineage>
        <taxon>Eukaryota</taxon>
        <taxon>Viridiplantae</taxon>
        <taxon>Streptophyta</taxon>
        <taxon>Embryophyta</taxon>
        <taxon>Tracheophyta</taxon>
        <taxon>Spermatophyta</taxon>
        <taxon>Magnoliopsida</taxon>
        <taxon>eudicotyledons</taxon>
        <taxon>Gunneridae</taxon>
        <taxon>Pentapetalae</taxon>
        <taxon>rosids</taxon>
        <taxon>malvids</taxon>
        <taxon>Brassicales</taxon>
        <taxon>Brassicaceae</taxon>
        <taxon>Camelineae</taxon>
        <taxon>Arabidopsis</taxon>
    </lineage>
</organism>
<keyword id="KW-0010">Activator</keyword>
<keyword id="KW-0025">Alternative splicing</keyword>
<keyword id="KW-0539">Nucleus</keyword>
<keyword id="KW-1185">Reference proteome</keyword>
<keyword id="KW-0804">Transcription</keyword>
<keyword id="KW-0805">Transcription regulation</keyword>
<evidence type="ECO:0000255" key="1">
    <source>
        <dbReference type="PROSITE-ProRule" id="PRU01001"/>
    </source>
</evidence>
<evidence type="ECO:0000255" key="2">
    <source>
        <dbReference type="PROSITE-ProRule" id="PRU01002"/>
    </source>
</evidence>
<evidence type="ECO:0000256" key="3">
    <source>
        <dbReference type="SAM" id="MobiDB-lite"/>
    </source>
</evidence>
<evidence type="ECO:0000269" key="4">
    <source>
    </source>
</evidence>
<evidence type="ECO:0000269" key="5">
    <source>
    </source>
</evidence>
<evidence type="ECO:0000269" key="6">
    <source>
    </source>
</evidence>
<evidence type="ECO:0000269" key="7">
    <source>
    </source>
</evidence>
<evidence type="ECO:0000303" key="8">
    <source ref="4"/>
</evidence>
<evidence type="ECO:0000305" key="9"/>
<gene>
    <name type="primary">GRF5</name>
    <name type="ordered locus">At3g13960</name>
    <name type="ORF">MDC16.8</name>
</gene>
<reference key="1">
    <citation type="journal article" date="2003" name="Plant J.">
        <title>The AtGRF family of putative transcription factors is involved in leaf and cotyledon growth in Arabidopsis.</title>
        <authorList>
            <person name="Kim J.H."/>
            <person name="Choi D."/>
            <person name="Kende H."/>
        </authorList>
    </citation>
    <scope>NUCLEOTIDE SEQUENCE [MRNA] (ISOFORM 1)</scope>
    <scope>GENE FAMILY</scope>
    <scope>NOMENCLATURE</scope>
    <scope>TISSUE SPECIFICITY</scope>
</reference>
<reference key="2">
    <citation type="journal article" date="2000" name="DNA Res.">
        <title>Structural analysis of Arabidopsis thaliana chromosome 3. I. Sequence features of the regions of 4,504,864 bp covered by sixty P1 and TAC clones.</title>
        <authorList>
            <person name="Sato S."/>
            <person name="Nakamura Y."/>
            <person name="Kaneko T."/>
            <person name="Katoh T."/>
            <person name="Asamizu E."/>
            <person name="Tabata S."/>
        </authorList>
    </citation>
    <scope>NUCLEOTIDE SEQUENCE [LARGE SCALE GENOMIC DNA]</scope>
    <source>
        <strain>cv. Columbia</strain>
    </source>
</reference>
<reference key="3">
    <citation type="journal article" date="2017" name="Plant J.">
        <title>Araport11: a complete reannotation of the Arabidopsis thaliana reference genome.</title>
        <authorList>
            <person name="Cheng C.Y."/>
            <person name="Krishnakumar V."/>
            <person name="Chan A.P."/>
            <person name="Thibaud-Nissen F."/>
            <person name="Schobel S."/>
            <person name="Town C.D."/>
        </authorList>
    </citation>
    <scope>GENOME REANNOTATION</scope>
    <source>
        <strain>cv. Columbia</strain>
    </source>
</reference>
<reference key="4">
    <citation type="submission" date="2009-03" db="EMBL/GenBank/DDBJ databases">
        <title>ORF cloning and analysis of Arabidopsis transcription factor genes.</title>
        <authorList>
            <person name="Fujita M."/>
            <person name="Mizukado S."/>
            <person name="Seki M."/>
            <person name="Shinozaki K."/>
            <person name="Mitsuda N."/>
            <person name="Takiguchi Y."/>
            <person name="Takagi M."/>
        </authorList>
    </citation>
    <scope>NUCLEOTIDE SEQUENCE [LARGE SCALE MRNA] OF 2-397 (ISOFORM 2)</scope>
</reference>
<reference key="5">
    <citation type="journal article" date="2004" name="Proc. Natl. Acad. Sci. U.S.A.">
        <title>A transcriptional coactivator, AtGIF1, is involved in regulating leaf growth and morphology in Arabidopsis.</title>
        <authorList>
            <person name="Kim J.H."/>
            <person name="Kende H."/>
        </authorList>
    </citation>
    <scope>FUNCTION</scope>
</reference>
<reference key="6">
    <citation type="journal article" date="2005" name="Plant J.">
        <title>The transcription factor AtGRF5 and the transcription coactivator AN3 regulate cell proliferation in leaf primordia of Arabidopsis thaliana.</title>
        <authorList>
            <person name="Horiguchi G."/>
            <person name="Kim G.T."/>
            <person name="Tsukaya H."/>
        </authorList>
    </citation>
    <scope>FUNCTION</scope>
    <scope>DISRUPTION PHENOTYPE</scope>
    <scope>TISSUE SPECIFICITY</scope>
    <scope>INTERACTION WITH GIF1</scope>
</reference>
<reference key="7">
    <citation type="journal article" date="2010" name="Development">
        <title>Control of cell proliferation in Arabidopsis thaliana by microRNA miR396.</title>
        <authorList>
            <person name="Rodriguez R.E."/>
            <person name="Mecchia M.A."/>
            <person name="Debernardi J.M."/>
            <person name="Schommer C."/>
            <person name="Weigel D."/>
            <person name="Palatnik J.F."/>
        </authorList>
    </citation>
    <scope>DEVELOPMENTAL STAGE</scope>
</reference>
<comment type="function">
    <text evidence="5 6">Transcription activator that plays a role in the regulation of cell expansion in leaf and cotyledons tissues. Acts together with GIF1 for the development of appropriate leaf size and shape through the promotion and/or maintenance of cell proliferation activity in leaf primordia.</text>
</comment>
<comment type="subunit">
    <text evidence="6">Interacts with GIF1.</text>
</comment>
<comment type="interaction">
    <interactant intactId="EBI-1396652">
        <id>Q8L8A6</id>
    </interactant>
    <interactant intactId="EBI-1798250">
        <id>Q39011</id>
        <label>ASK7</label>
    </interactant>
    <organismsDiffer>false</organismsDiffer>
    <experiments>3</experiments>
</comment>
<comment type="interaction">
    <interactant intactId="EBI-1396652">
        <id>Q8L8A6</id>
    </interactant>
    <interactant intactId="EBI-4446727">
        <id>Q94ID6</id>
        <label>ERF12</label>
    </interactant>
    <organismsDiffer>false</organismsDiffer>
    <experiments>3</experiments>
</comment>
<comment type="interaction">
    <interactant intactId="EBI-1396652">
        <id>Q8L8A6</id>
    </interactant>
    <interactant intactId="EBI-1396623">
        <id>Q8L8A5</id>
        <label>GIF1</label>
    </interactant>
    <organismsDiffer>false</organismsDiffer>
    <experiments>4</experiments>
</comment>
<comment type="interaction">
    <interactant intactId="EBI-1396652">
        <id>Q8L8A6</id>
    </interactant>
    <interactant intactId="EBI-1396863">
        <id>Q9MAL9</id>
        <label>GIF2</label>
    </interactant>
    <organismsDiffer>false</organismsDiffer>
    <experiments>3</experiments>
</comment>
<comment type="interaction">
    <interactant intactId="EBI-1396652">
        <id>Q8L8A6</id>
    </interactant>
    <interactant intactId="EBI-15194507">
        <id>Q93VH6</id>
        <label>GIF3</label>
    </interactant>
    <organismsDiffer>false</organismsDiffer>
    <experiments>3</experiments>
</comment>
<comment type="interaction">
    <interactant intactId="EBI-1396652">
        <id>Q8L8A6</id>
    </interactant>
    <interactant intactId="EBI-3946459">
        <id>Q9C5X0</id>
        <label>IAA34</label>
    </interactant>
    <organismsDiffer>false</organismsDiffer>
    <experiments>3</experiments>
</comment>
<comment type="subcellular location">
    <subcellularLocation>
        <location evidence="2">Nucleus</location>
    </subcellularLocation>
</comment>
<comment type="alternative products">
    <event type="alternative splicing"/>
    <isoform>
        <id>Q8L8A6-1</id>
        <name>1</name>
        <sequence type="displayed"/>
    </isoform>
    <isoform>
        <id>Q8L8A6-2</id>
        <name>2</name>
        <sequence type="described" ref="VSP_044146"/>
    </isoform>
</comment>
<comment type="tissue specificity">
    <text evidence="4 6">Strongly expressed in actively growing and developing tissues, such as roots, upper stems, and shoot tips containing the shoot apical meristem (SAM) and flower buds. Also expressed in mature flowers, but weakly expressed in mature stems and leaves.</text>
</comment>
<comment type="developmental stage">
    <text evidence="7">Expressed during the early stages of leaf development and expression decreases with the maturation of the leaf.</text>
</comment>
<comment type="domain">
    <text>The QLQ domain and WRC domain may be involved in protein-protein interaction and DNA-binding, respectively.</text>
</comment>
<comment type="disruption phenotype">
    <text evidence="6">Small and narrow leaves.</text>
</comment>
<comment type="miscellaneous">
    <molecule>Isoform 2</molecule>
    <text evidence="9">May be due to intron retention.</text>
</comment>
<comment type="similarity">
    <text evidence="9">Belongs to the GRF family.</text>
</comment>
<sequence length="397" mass="44696">MMSLSGSSGRTIGRPPFTPTQWEELEHQALIYKYMVSGVPVPPELIFSIRRSLDTSLVSRLLPHQSLGWGCYQMGFGRKPDPEPGRCRRTDGKKWRCSREAYPDSKYCEKHMHRGRNRARKSLDQNQTTTTPLTSPSLSFTNNNNPSPTLSSSSSSNSSSTTYSASSSSMDAYSNSNRFGLGGSSSNTRGYFNSHSLDYPYPSTSPKQQQQTLHHASALSLHQNTNSTSQFNVLASATDHKDFRYFQGIGERVGGVGERTFFPEASRSFQDSPYHHHQQPLATVMNDPYHHCSTDHNKIDHHHTYSSSSSSQHLHHDHDHRQQQCFVLGADMFNKPTRSVLANSSRQDQNQEEDEKDSSESSKKSLHHFFGEDWAQNKNSSDSWLDLSSHSRLDTGS</sequence>
<proteinExistence type="evidence at protein level"/>
<accession>Q8L8A6</accession>
<accession>C0SVA9</accession>
<accession>Q9LVK4</accession>
<dbReference type="EMBL" id="AY102638">
    <property type="protein sequence ID" value="AAM52880.1"/>
    <property type="molecule type" value="mRNA"/>
</dbReference>
<dbReference type="EMBL" id="AB019229">
    <property type="protein sequence ID" value="BAB02326.1"/>
    <property type="molecule type" value="Genomic_DNA"/>
</dbReference>
<dbReference type="EMBL" id="CP002686">
    <property type="protein sequence ID" value="AEE75445.1"/>
    <property type="molecule type" value="Genomic_DNA"/>
</dbReference>
<dbReference type="EMBL" id="AB493612">
    <property type="protein sequence ID" value="BAH30450.1"/>
    <property type="molecule type" value="mRNA"/>
</dbReference>
<dbReference type="RefSeq" id="NP_188012.2">
    <molecule id="Q8L8A6-1"/>
    <property type="nucleotide sequence ID" value="NM_112250.3"/>
</dbReference>
<dbReference type="BioGRID" id="5943">
    <property type="interactions" value="33"/>
</dbReference>
<dbReference type="FunCoup" id="Q8L8A6">
    <property type="interactions" value="6"/>
</dbReference>
<dbReference type="IntAct" id="Q8L8A6">
    <property type="interactions" value="35"/>
</dbReference>
<dbReference type="STRING" id="3702.Q8L8A6"/>
<dbReference type="PaxDb" id="3702-AT3G13960.1"/>
<dbReference type="ProteomicsDB" id="247287">
    <molecule id="Q8L8A6-1"/>
</dbReference>
<dbReference type="EnsemblPlants" id="AT3G13960.1">
    <molecule id="Q8L8A6-1"/>
    <property type="protein sequence ID" value="AT3G13960.1"/>
    <property type="gene ID" value="AT3G13960"/>
</dbReference>
<dbReference type="GeneID" id="820609"/>
<dbReference type="Gramene" id="AT3G13960.1">
    <molecule id="Q8L8A6-1"/>
    <property type="protein sequence ID" value="AT3G13960.1"/>
    <property type="gene ID" value="AT3G13960"/>
</dbReference>
<dbReference type="KEGG" id="ath:AT3G13960"/>
<dbReference type="Araport" id="AT3G13960"/>
<dbReference type="TAIR" id="AT3G13960">
    <property type="gene designation" value="GRF5"/>
</dbReference>
<dbReference type="eggNOG" id="ENOG502RAHZ">
    <property type="taxonomic scope" value="Eukaryota"/>
</dbReference>
<dbReference type="HOGENOM" id="CLU_037908_1_0_1"/>
<dbReference type="InParanoid" id="Q8L8A6"/>
<dbReference type="OMA" id="AQKPLRH"/>
<dbReference type="PhylomeDB" id="Q8L8A6"/>
<dbReference type="PRO" id="PR:Q8L8A6"/>
<dbReference type="Proteomes" id="UP000006548">
    <property type="component" value="Chromosome 3"/>
</dbReference>
<dbReference type="ExpressionAtlas" id="Q8L8A6">
    <property type="expression patterns" value="baseline and differential"/>
</dbReference>
<dbReference type="GO" id="GO:0005634">
    <property type="term" value="C:nucleus"/>
    <property type="evidence" value="ECO:0000250"/>
    <property type="project" value="TAIR"/>
</dbReference>
<dbReference type="GO" id="GO:0005524">
    <property type="term" value="F:ATP binding"/>
    <property type="evidence" value="ECO:0007669"/>
    <property type="project" value="InterPro"/>
</dbReference>
<dbReference type="GO" id="GO:0006351">
    <property type="term" value="P:DNA-templated transcription"/>
    <property type="evidence" value="ECO:0007669"/>
    <property type="project" value="InterPro"/>
</dbReference>
<dbReference type="GO" id="GO:0048366">
    <property type="term" value="P:leaf development"/>
    <property type="evidence" value="ECO:0000315"/>
    <property type="project" value="TAIR"/>
</dbReference>
<dbReference type="GO" id="GO:0006355">
    <property type="term" value="P:regulation of DNA-templated transcription"/>
    <property type="evidence" value="ECO:0007669"/>
    <property type="project" value="InterPro"/>
</dbReference>
<dbReference type="GO" id="GO:0009409">
    <property type="term" value="P:response to cold"/>
    <property type="evidence" value="ECO:0000270"/>
    <property type="project" value="TAIR"/>
</dbReference>
<dbReference type="GO" id="GO:0009739">
    <property type="term" value="P:response to gibberellin"/>
    <property type="evidence" value="ECO:0000315"/>
    <property type="project" value="TAIR"/>
</dbReference>
<dbReference type="InterPro" id="IPR014978">
    <property type="entry name" value="Gln-Leu-Gln_QLQ"/>
</dbReference>
<dbReference type="InterPro" id="IPR031137">
    <property type="entry name" value="GRF"/>
</dbReference>
<dbReference type="InterPro" id="IPR014977">
    <property type="entry name" value="WRC_dom"/>
</dbReference>
<dbReference type="PANTHER" id="PTHR31602">
    <property type="entry name" value="GROWTH-REGULATING FACTOR 5"/>
    <property type="match status" value="1"/>
</dbReference>
<dbReference type="PANTHER" id="PTHR31602:SF60">
    <property type="entry name" value="GROWTH-REGULATING FACTOR 5"/>
    <property type="match status" value="1"/>
</dbReference>
<dbReference type="Pfam" id="PF08880">
    <property type="entry name" value="QLQ"/>
    <property type="match status" value="1"/>
</dbReference>
<dbReference type="Pfam" id="PF08879">
    <property type="entry name" value="WRC"/>
    <property type="match status" value="1"/>
</dbReference>
<dbReference type="SMART" id="SM00951">
    <property type="entry name" value="QLQ"/>
    <property type="match status" value="1"/>
</dbReference>
<dbReference type="PROSITE" id="PS51666">
    <property type="entry name" value="QLQ"/>
    <property type="match status" value="1"/>
</dbReference>
<dbReference type="PROSITE" id="PS51667">
    <property type="entry name" value="WRC"/>
    <property type="match status" value="1"/>
</dbReference>